<dbReference type="EMBL" id="BC102402">
    <property type="protein sequence ID" value="AAI02403.1"/>
    <property type="molecule type" value="mRNA"/>
</dbReference>
<dbReference type="RefSeq" id="NP_001029213.1">
    <property type="nucleotide sequence ID" value="NM_001034041.2"/>
</dbReference>
<dbReference type="RefSeq" id="XP_005207811.1">
    <property type="nucleotide sequence ID" value="XM_005207754.4"/>
</dbReference>
<dbReference type="RefSeq" id="XP_005207812.1">
    <property type="nucleotide sequence ID" value="XM_005207755.4"/>
</dbReference>
<dbReference type="RefSeq" id="XP_005207813.1">
    <property type="nucleotide sequence ID" value="XM_005207756.5"/>
</dbReference>
<dbReference type="RefSeq" id="XP_005207814.1">
    <property type="nucleotide sequence ID" value="XM_005207757.5"/>
</dbReference>
<dbReference type="RefSeq" id="XP_005207815.1">
    <property type="nucleotide sequence ID" value="XM_005207758.4"/>
</dbReference>
<dbReference type="BioGRID" id="159869">
    <property type="interactions" value="1"/>
</dbReference>
<dbReference type="FunCoup" id="Q3T0G8">
    <property type="interactions" value="235"/>
</dbReference>
<dbReference type="STRING" id="9913.ENSBTAP00000021300"/>
<dbReference type="PaxDb" id="9913-ENSBTAP00000021300"/>
<dbReference type="GeneID" id="282857"/>
<dbReference type="KEGG" id="bta:282857"/>
<dbReference type="CTD" id="6622"/>
<dbReference type="VEuPathDB" id="HostDB:ENSBTAG00000024957"/>
<dbReference type="eggNOG" id="ENOG502S0Q7">
    <property type="taxonomic scope" value="Eukaryota"/>
</dbReference>
<dbReference type="HOGENOM" id="CLU_129378_1_0_1"/>
<dbReference type="InParanoid" id="Q3T0G8"/>
<dbReference type="OMA" id="LPQEGMM"/>
<dbReference type="OrthoDB" id="9900372at2759"/>
<dbReference type="TreeFam" id="TF332776"/>
<dbReference type="Reactome" id="R-BTA-9833482">
    <property type="pathway name" value="PKR-mediated signaling"/>
</dbReference>
<dbReference type="Proteomes" id="UP000009136">
    <property type="component" value="Chromosome 6"/>
</dbReference>
<dbReference type="Bgee" id="ENSBTAG00000024957">
    <property type="expression patterns" value="Expressed in Ammon's horn and 99 other cell types or tissues"/>
</dbReference>
<dbReference type="GO" id="GO:0043679">
    <property type="term" value="C:axon terminus"/>
    <property type="evidence" value="ECO:0000318"/>
    <property type="project" value="GO_Central"/>
</dbReference>
<dbReference type="GO" id="GO:0005737">
    <property type="term" value="C:cytoplasm"/>
    <property type="evidence" value="ECO:0000318"/>
    <property type="project" value="GO_Central"/>
</dbReference>
<dbReference type="GO" id="GO:0005829">
    <property type="term" value="C:cytosol"/>
    <property type="evidence" value="ECO:0000250"/>
    <property type="project" value="UniProtKB"/>
</dbReference>
<dbReference type="GO" id="GO:0005615">
    <property type="term" value="C:extracellular space"/>
    <property type="evidence" value="ECO:0000250"/>
    <property type="project" value="UniProtKB"/>
</dbReference>
<dbReference type="GO" id="GO:0016020">
    <property type="term" value="C:membrane"/>
    <property type="evidence" value="ECO:0000250"/>
    <property type="project" value="UniProtKB"/>
</dbReference>
<dbReference type="GO" id="GO:0043025">
    <property type="term" value="C:neuronal cell body"/>
    <property type="evidence" value="ECO:0000318"/>
    <property type="project" value="GO_Central"/>
</dbReference>
<dbReference type="GO" id="GO:0005634">
    <property type="term" value="C:nucleus"/>
    <property type="evidence" value="ECO:0000250"/>
    <property type="project" value="UniProtKB"/>
</dbReference>
<dbReference type="GO" id="GO:0005507">
    <property type="term" value="F:copper ion binding"/>
    <property type="evidence" value="ECO:0000250"/>
    <property type="project" value="UniProtKB"/>
</dbReference>
<dbReference type="GO" id="GO:1903136">
    <property type="term" value="F:cuprous ion binding"/>
    <property type="evidence" value="ECO:0000318"/>
    <property type="project" value="GO_Central"/>
</dbReference>
<dbReference type="GO" id="GO:0042802">
    <property type="term" value="F:identical protein binding"/>
    <property type="evidence" value="ECO:0000250"/>
    <property type="project" value="UniProtKB"/>
</dbReference>
<dbReference type="GO" id="GO:0007268">
    <property type="term" value="P:chemical synaptic transmission"/>
    <property type="evidence" value="ECO:0000318"/>
    <property type="project" value="GO_Central"/>
</dbReference>
<dbReference type="GO" id="GO:0014059">
    <property type="term" value="P:regulation of dopamine secretion"/>
    <property type="evidence" value="ECO:0007669"/>
    <property type="project" value="InterPro"/>
</dbReference>
<dbReference type="GO" id="GO:0050808">
    <property type="term" value="P:synapse organization"/>
    <property type="evidence" value="ECO:0000318"/>
    <property type="project" value="GO_Central"/>
</dbReference>
<dbReference type="GO" id="GO:0048488">
    <property type="term" value="P:synaptic vesicle endocytosis"/>
    <property type="evidence" value="ECO:0000318"/>
    <property type="project" value="GO_Central"/>
</dbReference>
<dbReference type="FunFam" id="1.10.287.700:FF:000001">
    <property type="entry name" value="Alpha-synuclein"/>
    <property type="match status" value="1"/>
</dbReference>
<dbReference type="Gene3D" id="1.10.287.700">
    <property type="entry name" value="Helix hairpin bin"/>
    <property type="match status" value="1"/>
</dbReference>
<dbReference type="InterPro" id="IPR001058">
    <property type="entry name" value="Synuclein"/>
</dbReference>
<dbReference type="InterPro" id="IPR002460">
    <property type="entry name" value="Synuclein_alpha"/>
</dbReference>
<dbReference type="PANTHER" id="PTHR13820:SF5">
    <property type="entry name" value="ALPHA-SYNUCLEIN"/>
    <property type="match status" value="1"/>
</dbReference>
<dbReference type="PANTHER" id="PTHR13820">
    <property type="entry name" value="SYNUCLEIN"/>
    <property type="match status" value="1"/>
</dbReference>
<dbReference type="Pfam" id="PF01387">
    <property type="entry name" value="Synuclein"/>
    <property type="match status" value="1"/>
</dbReference>
<dbReference type="PRINTS" id="PR01212">
    <property type="entry name" value="ASYNUCLEIN"/>
</dbReference>
<dbReference type="PRINTS" id="PR01211">
    <property type="entry name" value="SYNUCLEIN"/>
</dbReference>
<dbReference type="SUPFAM" id="SSF118375">
    <property type="entry name" value="Synuclein"/>
    <property type="match status" value="1"/>
</dbReference>
<keyword id="KW-0007">Acetylation</keyword>
<keyword id="KW-0966">Cell projection</keyword>
<keyword id="KW-0186">Copper</keyword>
<keyword id="KW-0963">Cytoplasm</keyword>
<keyword id="KW-0472">Membrane</keyword>
<keyword id="KW-0479">Metal-binding</keyword>
<keyword id="KW-0539">Nucleus</keyword>
<keyword id="KW-0597">Phosphoprotein</keyword>
<keyword id="KW-1185">Reference proteome</keyword>
<keyword id="KW-0677">Repeat</keyword>
<keyword id="KW-0964">Secreted</keyword>
<keyword id="KW-0770">Synapse</keyword>
<keyword id="KW-0832">Ubl conjugation</keyword>
<proteinExistence type="evidence at transcript level"/>
<organism>
    <name type="scientific">Bos taurus</name>
    <name type="common">Bovine</name>
    <dbReference type="NCBI Taxonomy" id="9913"/>
    <lineage>
        <taxon>Eukaryota</taxon>
        <taxon>Metazoa</taxon>
        <taxon>Chordata</taxon>
        <taxon>Craniata</taxon>
        <taxon>Vertebrata</taxon>
        <taxon>Euteleostomi</taxon>
        <taxon>Mammalia</taxon>
        <taxon>Eutheria</taxon>
        <taxon>Laurasiatheria</taxon>
        <taxon>Artiodactyla</taxon>
        <taxon>Ruminantia</taxon>
        <taxon>Pecora</taxon>
        <taxon>Bovidae</taxon>
        <taxon>Bovinae</taxon>
        <taxon>Bos</taxon>
    </lineage>
</organism>
<comment type="function">
    <text evidence="4">Neuronal protein that plays several roles in synaptic activity such as regulation of synaptic vesicle trafficking and subsequent neurotransmitter release (By similarity). Participates as a monomer in synaptic vesicle exocytosis by enhancing vesicle priming, fusion and dilation of exocytotic fusion pores (By similarity). Mechanistically, acts by increasing local Ca(2+) release from microdomains which is essential for the enhancement of ATP-induced exocytosis (By similarity). Also acts as a molecular chaperone in its multimeric membrane-bound state, assisting in the folding of synaptic fusion components called SNAREs (Soluble NSF Attachment Protein REceptors) at presynaptic plasma membrane in conjunction with cysteine string protein-alpha/DNAJC5 (By similarity). This chaperone activity is important to sustain normal SNARE-complex assembly during aging (By similarity). Also plays a role in the regulation of the dopamine neurotransmission by associating with the dopamine transporter (DAT1) and thereby modulating its activity (By similarity).</text>
</comment>
<comment type="subunit">
    <text evidence="2 3 4">Soluble monomer. Homotetramer. A dynamic intracellular population of tetramers and monomers coexists normally and the tetramer plays an essential role in maintaining homeostasis (By similarity). Interacts with UCHL1 (By similarity). Interacts with phospholipase D and histones. Interacts (via N-terminus) with synphilin-1/SNCAIP; this interaction promotes formation of SNCA inclusions in the cytoplasm. Interacts with CALM1. Interacts with STXBP1; this interaction controls SNCA self-replicating aggregation. Interacts with SNARE components VAMP2 and SNAP25; these interactions allows SNARE complex assembly and integrity (By similarity). Interacts with RPH3A and RAB3A (By similarity). Interacts with SERF1A; this interaction promotes the aggregation of SNCA (By similarity). Interacts with SEPTIN4 (By similarity). Interacts with DDX10; this interaction causes DDX10 mislocalization to the nucleoplasm and cytoplasmic inclusions (By similarity).</text>
</comment>
<comment type="subcellular location">
    <subcellularLocation>
        <location evidence="4">Cytoplasm</location>
    </subcellularLocation>
    <subcellularLocation>
        <location evidence="4">Membrane</location>
    </subcellularLocation>
    <subcellularLocation>
        <location evidence="4">Nucleus</location>
    </subcellularLocation>
    <subcellularLocation>
        <location evidence="4">Synapse</location>
    </subcellularLocation>
    <subcellularLocation>
        <location evidence="4">Secreted</location>
    </subcellularLocation>
    <subcellularLocation>
        <location evidence="2">Cell projection</location>
        <location evidence="2">Axon</location>
    </subcellularLocation>
    <text evidence="2 4">Membrane-bound in dopaminergic neurons (By similarity). Expressed and colocalized with SEPTIN4 in dopaminergic axon terminals, especially at the varicosities (By similarity).</text>
</comment>
<comment type="PTM">
    <text evidence="4">Phosphorylated, predominantly on serine residues. Phosphorylated on Tyr-125 upon osmotic stress.</text>
</comment>
<comment type="PTM">
    <text evidence="3">Ubiquitinated. The predominant conjugate is the diubiquitinated form.</text>
</comment>
<comment type="PTM">
    <text evidence="4">Acetylation at Met-1 seems to be important for proper folding and native oligomeric structure.</text>
</comment>
<comment type="similarity">
    <text evidence="6">Belongs to the synuclein family.</text>
</comment>
<gene>
    <name type="primary">SNCA</name>
</gene>
<protein>
    <recommendedName>
        <fullName>Alpha-synuclein</fullName>
    </recommendedName>
</protein>
<feature type="chain" id="PRO_0000184019" description="Alpha-synuclein">
    <location>
        <begin position="1"/>
        <end position="140"/>
    </location>
</feature>
<feature type="region of interest" description="Disordered" evidence="5">
    <location>
        <begin position="93"/>
        <end position="140"/>
    </location>
</feature>
<feature type="region of interest" description="Interaction with SERF1A" evidence="4">
    <location>
        <begin position="111"/>
        <end position="140"/>
    </location>
</feature>
<feature type="compositionally biased region" description="Basic and acidic residues" evidence="5">
    <location>
        <begin position="95"/>
        <end position="105"/>
    </location>
</feature>
<feature type="compositionally biased region" description="Acidic residues" evidence="5">
    <location>
        <begin position="112"/>
        <end position="140"/>
    </location>
</feature>
<feature type="binding site" evidence="1">
    <location>
        <position position="2"/>
    </location>
    <ligand>
        <name>Cu cation</name>
        <dbReference type="ChEBI" id="CHEBI:23378"/>
    </ligand>
</feature>
<feature type="binding site" evidence="1">
    <location>
        <position position="50"/>
    </location>
    <ligand>
        <name>Cu cation</name>
        <dbReference type="ChEBI" id="CHEBI:23378"/>
    </ligand>
</feature>
<feature type="modified residue" description="N-acetylmethionine" evidence="4">
    <location>
        <position position="1"/>
    </location>
</feature>
<feature type="modified residue" description="Phosphoserine" evidence="4">
    <location>
        <position position="87"/>
    </location>
</feature>
<feature type="modified residue" description="Phosphotyrosine; by FYN" evidence="4">
    <location>
        <position position="125"/>
    </location>
</feature>
<feature type="modified residue" description="Phosphoserine; by PLK2" evidence="4">
    <location>
        <position position="129"/>
    </location>
</feature>
<accession>Q3T0G8</accession>
<name>SYUA_BOVIN</name>
<sequence length="140" mass="14508">MDVFMKGLSKAKEGVVAAAEKTKQGVAEAAGRTKEGVLYVGSKTKEGVVHGVTTVAEKTKEQVTNVGEAVVTGVTAVAQKTVEGAGSIAAATGFGKKDHMGKGEEGASQEGILEDMPVDPDNEAYEMPSEEGYQDYEPEA</sequence>
<evidence type="ECO:0000250" key="1"/>
<evidence type="ECO:0000250" key="2">
    <source>
        <dbReference type="UniProtKB" id="O55042"/>
    </source>
</evidence>
<evidence type="ECO:0000250" key="3">
    <source>
        <dbReference type="UniProtKB" id="P37377"/>
    </source>
</evidence>
<evidence type="ECO:0000250" key="4">
    <source>
        <dbReference type="UniProtKB" id="P37840"/>
    </source>
</evidence>
<evidence type="ECO:0000256" key="5">
    <source>
        <dbReference type="SAM" id="MobiDB-lite"/>
    </source>
</evidence>
<evidence type="ECO:0000305" key="6"/>
<reference key="1">
    <citation type="submission" date="2005-08" db="EMBL/GenBank/DDBJ databases">
        <authorList>
            <consortium name="NIH - Mammalian Gene Collection (MGC) project"/>
        </authorList>
    </citation>
    <scope>NUCLEOTIDE SEQUENCE [LARGE SCALE MRNA]</scope>
    <source>
        <strain>Crossbred X Angus</strain>
        <tissue>Ileum</tissue>
    </source>
</reference>